<proteinExistence type="inferred from homology"/>
<feature type="chain" id="PRO_0000320201" description="Claudin-24">
    <location>
        <begin position="1"/>
        <end position="220"/>
    </location>
</feature>
<feature type="topological domain" description="Cytoplasmic" evidence="2">
    <location>
        <begin position="1"/>
        <end position="10"/>
    </location>
</feature>
<feature type="transmembrane region" description="Helical" evidence="2">
    <location>
        <begin position="11"/>
        <end position="31"/>
    </location>
</feature>
<feature type="topological domain" description="Extracellular" evidence="2">
    <location>
        <begin position="32"/>
        <end position="81"/>
    </location>
</feature>
<feature type="transmembrane region" description="Helical" evidence="2">
    <location>
        <begin position="82"/>
        <end position="102"/>
    </location>
</feature>
<feature type="topological domain" description="Cytoplasmic" evidence="2">
    <location>
        <begin position="103"/>
        <end position="117"/>
    </location>
</feature>
<feature type="transmembrane region" description="Helical" evidence="2">
    <location>
        <begin position="118"/>
        <end position="138"/>
    </location>
</feature>
<feature type="topological domain" description="Extracellular" evidence="2">
    <location>
        <begin position="139"/>
        <end position="161"/>
    </location>
</feature>
<feature type="transmembrane region" description="Helical" evidence="2">
    <location>
        <begin position="162"/>
        <end position="182"/>
    </location>
</feature>
<feature type="topological domain" description="Cytoplasmic" evidence="2">
    <location>
        <begin position="183"/>
        <end position="220"/>
    </location>
</feature>
<feature type="sequence variant" id="VAR_055660" description="In dbSNP:rs7688467.">
    <original>L</original>
    <variation>F</variation>
    <location>
        <position position="18"/>
    </location>
</feature>
<keyword id="KW-0965">Cell junction</keyword>
<keyword id="KW-1003">Cell membrane</keyword>
<keyword id="KW-0472">Membrane</keyword>
<keyword id="KW-1185">Reference proteome</keyword>
<keyword id="KW-0796">Tight junction</keyword>
<keyword id="KW-0812">Transmembrane</keyword>
<keyword id="KW-1133">Transmembrane helix</keyword>
<evidence type="ECO:0000250" key="1"/>
<evidence type="ECO:0000255" key="2"/>
<evidence type="ECO:0000305" key="3"/>
<evidence type="ECO:0000312" key="4">
    <source>
        <dbReference type="HGNC" id="HGNC:37200"/>
    </source>
</evidence>
<comment type="function">
    <text evidence="1">Plays a major role in tight junction-specific obliteration of the intercellular space, through calcium-independent cell-adhesion activity.</text>
</comment>
<comment type="subcellular location">
    <subcellularLocation>
        <location evidence="1">Cell junction</location>
        <location evidence="1">Tight junction</location>
    </subcellularLocation>
    <subcellularLocation>
        <location evidence="1">Cell membrane</location>
        <topology evidence="1">Multi-pass membrane protein</topology>
    </subcellularLocation>
</comment>
<comment type="similarity">
    <text evidence="3">Belongs to the claudin family.</text>
</comment>
<reference key="1">
    <citation type="journal article" date="2005" name="Nature">
        <title>Generation and annotation of the DNA sequences of human chromosomes 2 and 4.</title>
        <authorList>
            <person name="Hillier L.W."/>
            <person name="Graves T.A."/>
            <person name="Fulton R.S."/>
            <person name="Fulton L.A."/>
            <person name="Pepin K.H."/>
            <person name="Minx P."/>
            <person name="Wagner-McPherson C."/>
            <person name="Layman D."/>
            <person name="Wylie K."/>
            <person name="Sekhon M."/>
            <person name="Becker M.C."/>
            <person name="Fewell G.A."/>
            <person name="Delehaunty K.D."/>
            <person name="Miner T.L."/>
            <person name="Nash W.E."/>
            <person name="Kremitzki C."/>
            <person name="Oddy L."/>
            <person name="Du H."/>
            <person name="Sun H."/>
            <person name="Bradshaw-Cordum H."/>
            <person name="Ali J."/>
            <person name="Carter J."/>
            <person name="Cordes M."/>
            <person name="Harris A."/>
            <person name="Isak A."/>
            <person name="van Brunt A."/>
            <person name="Nguyen C."/>
            <person name="Du F."/>
            <person name="Courtney L."/>
            <person name="Kalicki J."/>
            <person name="Ozersky P."/>
            <person name="Abbott S."/>
            <person name="Armstrong J."/>
            <person name="Belter E.A."/>
            <person name="Caruso L."/>
            <person name="Cedroni M."/>
            <person name="Cotton M."/>
            <person name="Davidson T."/>
            <person name="Desai A."/>
            <person name="Elliott G."/>
            <person name="Erb T."/>
            <person name="Fronick C."/>
            <person name="Gaige T."/>
            <person name="Haakenson W."/>
            <person name="Haglund K."/>
            <person name="Holmes A."/>
            <person name="Harkins R."/>
            <person name="Kim K."/>
            <person name="Kruchowski S.S."/>
            <person name="Strong C.M."/>
            <person name="Grewal N."/>
            <person name="Goyea E."/>
            <person name="Hou S."/>
            <person name="Levy A."/>
            <person name="Martinka S."/>
            <person name="Mead K."/>
            <person name="McLellan M.D."/>
            <person name="Meyer R."/>
            <person name="Randall-Maher J."/>
            <person name="Tomlinson C."/>
            <person name="Dauphin-Kohlberg S."/>
            <person name="Kozlowicz-Reilly A."/>
            <person name="Shah N."/>
            <person name="Swearengen-Shahid S."/>
            <person name="Snider J."/>
            <person name="Strong J.T."/>
            <person name="Thompson J."/>
            <person name="Yoakum M."/>
            <person name="Leonard S."/>
            <person name="Pearman C."/>
            <person name="Trani L."/>
            <person name="Radionenko M."/>
            <person name="Waligorski J.E."/>
            <person name="Wang C."/>
            <person name="Rock S.M."/>
            <person name="Tin-Wollam A.-M."/>
            <person name="Maupin R."/>
            <person name="Latreille P."/>
            <person name="Wendl M.C."/>
            <person name="Yang S.-P."/>
            <person name="Pohl C."/>
            <person name="Wallis J.W."/>
            <person name="Spieth J."/>
            <person name="Bieri T.A."/>
            <person name="Berkowicz N."/>
            <person name="Nelson J.O."/>
            <person name="Osborne J."/>
            <person name="Ding L."/>
            <person name="Meyer R."/>
            <person name="Sabo A."/>
            <person name="Shotland Y."/>
            <person name="Sinha P."/>
            <person name="Wohldmann P.E."/>
            <person name="Cook L.L."/>
            <person name="Hickenbotham M.T."/>
            <person name="Eldred J."/>
            <person name="Williams D."/>
            <person name="Jones T.A."/>
            <person name="She X."/>
            <person name="Ciccarelli F.D."/>
            <person name="Izaurralde E."/>
            <person name="Taylor J."/>
            <person name="Schmutz J."/>
            <person name="Myers R.M."/>
            <person name="Cox D.R."/>
            <person name="Huang X."/>
            <person name="McPherson J.D."/>
            <person name="Mardis E.R."/>
            <person name="Clifton S.W."/>
            <person name="Warren W.C."/>
            <person name="Chinwalla A.T."/>
            <person name="Eddy S.R."/>
            <person name="Marra M.A."/>
            <person name="Ovcharenko I."/>
            <person name="Furey T.S."/>
            <person name="Miller W."/>
            <person name="Eichler E.E."/>
            <person name="Bork P."/>
            <person name="Suyama M."/>
            <person name="Torrents D."/>
            <person name="Waterston R.H."/>
            <person name="Wilson R.K."/>
        </authorList>
    </citation>
    <scope>NUCLEOTIDE SEQUENCE [LARGE SCALE GENOMIC DNA]</scope>
</reference>
<accession>A6NM45</accession>
<accession>F5H040</accession>
<gene>
    <name evidence="4" type="primary">CLDN24</name>
    <name evidence="4" type="synonym">CLDN21</name>
</gene>
<sequence>MALIFRTAMQSVGLLLSLLGWILSIITTYLPHWKNLNLDLNEMENWTMGLWQTCVIQEEVGMQCKDFDSFLALPAELRVSRILMFLSNGLGFLGLLVSGFGLDCLRIGESQRDLKRRLLILGGILSWASGITALVPVSWVAHKTVQEFWDENVPDFVPRWEFGEALFLGWFAGLSLLLGGCLLNCAACSSHAPLALGHYAVAQMQTQCPYLEDGTADPQV</sequence>
<protein>
    <recommendedName>
        <fullName evidence="4">Claudin-24</fullName>
    </recommendedName>
    <alternativeName>
        <fullName evidence="4">Claudin-21</fullName>
    </alternativeName>
</protein>
<dbReference type="EMBL" id="AC093844">
    <property type="status" value="NOT_ANNOTATED_CDS"/>
    <property type="molecule type" value="Genomic_DNA"/>
</dbReference>
<dbReference type="CCDS" id="CCDS54824.1"/>
<dbReference type="RefSeq" id="NP_001172078.1">
    <property type="nucleotide sequence ID" value="NM_001185149.1"/>
</dbReference>
<dbReference type="SMR" id="A6NM45"/>
<dbReference type="FunCoup" id="A6NM45">
    <property type="interactions" value="356"/>
</dbReference>
<dbReference type="STRING" id="9606.ENSP00000438400"/>
<dbReference type="BioMuta" id="CLDN24"/>
<dbReference type="PaxDb" id="9606-ENSP00000438400"/>
<dbReference type="Antibodypedia" id="71072">
    <property type="antibodies" value="1 antibodies from 1 providers"/>
</dbReference>
<dbReference type="DNASU" id="100132463"/>
<dbReference type="Ensembl" id="ENST00000541814.1">
    <property type="protein sequence ID" value="ENSP00000438400.1"/>
    <property type="gene ID" value="ENSG00000185758.9"/>
</dbReference>
<dbReference type="GeneID" id="100132463"/>
<dbReference type="KEGG" id="hsa:100132463"/>
<dbReference type="MANE-Select" id="ENST00000541814.1">
    <property type="protein sequence ID" value="ENSP00000438400.1"/>
    <property type="RefSeq nucleotide sequence ID" value="NM_001185149.1"/>
    <property type="RefSeq protein sequence ID" value="NP_001172078.1"/>
</dbReference>
<dbReference type="UCSC" id="uc021xva.1">
    <property type="organism name" value="human"/>
</dbReference>
<dbReference type="AGR" id="HGNC:37200"/>
<dbReference type="CTD" id="100132463"/>
<dbReference type="DisGeNET" id="100132463"/>
<dbReference type="GeneCards" id="CLDN24"/>
<dbReference type="HGNC" id="HGNC:37200">
    <property type="gene designation" value="CLDN24"/>
</dbReference>
<dbReference type="HPA" id="ENSG00000185758">
    <property type="expression patterns" value="Not detected"/>
</dbReference>
<dbReference type="neXtProt" id="NX_A6NM45"/>
<dbReference type="OpenTargets" id="ENSG00000185758"/>
<dbReference type="VEuPathDB" id="HostDB:ENSG00000185758"/>
<dbReference type="eggNOG" id="ENOG502RSH3">
    <property type="taxonomic scope" value="Eukaryota"/>
</dbReference>
<dbReference type="GeneTree" id="ENSGT00940000162234"/>
<dbReference type="InParanoid" id="A6NM45"/>
<dbReference type="OMA" id="MQTQCPY"/>
<dbReference type="OrthoDB" id="8612291at2759"/>
<dbReference type="PAN-GO" id="A6NM45">
    <property type="GO annotations" value="4 GO annotations based on evolutionary models"/>
</dbReference>
<dbReference type="PhylomeDB" id="A6NM45"/>
<dbReference type="TreeFam" id="TF331936"/>
<dbReference type="BioGRID-ORCS" id="100132463">
    <property type="hits" value="12 hits in 1046 CRISPR screens"/>
</dbReference>
<dbReference type="GenomeRNAi" id="100132463"/>
<dbReference type="Pharos" id="A6NM45">
    <property type="development level" value="Tdark"/>
</dbReference>
<dbReference type="Proteomes" id="UP000005640">
    <property type="component" value="Chromosome 4"/>
</dbReference>
<dbReference type="RNAct" id="A6NM45">
    <property type="molecule type" value="protein"/>
</dbReference>
<dbReference type="Bgee" id="ENSG00000185758">
    <property type="expression patterns" value="Expressed in male germ line stem cell (sensu Vertebrata) in testis and 46 other cell types or tissues"/>
</dbReference>
<dbReference type="GO" id="GO:0005923">
    <property type="term" value="C:bicellular tight junction"/>
    <property type="evidence" value="ECO:0000318"/>
    <property type="project" value="GO_Central"/>
</dbReference>
<dbReference type="GO" id="GO:0005886">
    <property type="term" value="C:plasma membrane"/>
    <property type="evidence" value="ECO:0000318"/>
    <property type="project" value="GO_Central"/>
</dbReference>
<dbReference type="GO" id="GO:0005198">
    <property type="term" value="F:structural molecule activity"/>
    <property type="evidence" value="ECO:0007669"/>
    <property type="project" value="InterPro"/>
</dbReference>
<dbReference type="GO" id="GO:0070830">
    <property type="term" value="P:bicellular tight junction assembly"/>
    <property type="evidence" value="ECO:0000318"/>
    <property type="project" value="GO_Central"/>
</dbReference>
<dbReference type="GO" id="GO:0007155">
    <property type="term" value="P:cell adhesion"/>
    <property type="evidence" value="ECO:0000318"/>
    <property type="project" value="GO_Central"/>
</dbReference>
<dbReference type="FunFam" id="1.20.140.150:FF:000001">
    <property type="entry name" value="Claudin"/>
    <property type="match status" value="1"/>
</dbReference>
<dbReference type="Gene3D" id="1.20.140.150">
    <property type="match status" value="1"/>
</dbReference>
<dbReference type="InterPro" id="IPR006187">
    <property type="entry name" value="Claudin"/>
</dbReference>
<dbReference type="InterPro" id="IPR017974">
    <property type="entry name" value="Claudin_CS"/>
</dbReference>
<dbReference type="InterPro" id="IPR004031">
    <property type="entry name" value="PMP22/EMP/MP20/Claudin"/>
</dbReference>
<dbReference type="PANTHER" id="PTHR12002">
    <property type="entry name" value="CLAUDIN"/>
    <property type="match status" value="1"/>
</dbReference>
<dbReference type="Pfam" id="PF00822">
    <property type="entry name" value="PMP22_Claudin"/>
    <property type="match status" value="1"/>
</dbReference>
<dbReference type="PRINTS" id="PR01077">
    <property type="entry name" value="CLAUDIN"/>
</dbReference>
<dbReference type="PROSITE" id="PS01346">
    <property type="entry name" value="CLAUDIN"/>
    <property type="match status" value="1"/>
</dbReference>
<organism>
    <name type="scientific">Homo sapiens</name>
    <name type="common">Human</name>
    <dbReference type="NCBI Taxonomy" id="9606"/>
    <lineage>
        <taxon>Eukaryota</taxon>
        <taxon>Metazoa</taxon>
        <taxon>Chordata</taxon>
        <taxon>Craniata</taxon>
        <taxon>Vertebrata</taxon>
        <taxon>Euteleostomi</taxon>
        <taxon>Mammalia</taxon>
        <taxon>Eutheria</taxon>
        <taxon>Euarchontoglires</taxon>
        <taxon>Primates</taxon>
        <taxon>Haplorrhini</taxon>
        <taxon>Catarrhini</taxon>
        <taxon>Hominidae</taxon>
        <taxon>Homo</taxon>
    </lineage>
</organism>
<name>CLD24_HUMAN</name>